<sequence>MERTTIMTLDFSKPGEAGYQSGFANEFATEALPGALPHARNSPQRAPYGLYAEQFSGTAFTAPRGHNRRSWLYRIRPAAVHRPFELVSGERRIVAEFGDSDDVPPTPPNQLRWDPLPMPAQPTDFVDGWVTMAGNGSAAAMSGCAIHLYAANRSMRERFFYSADGELLIVPQEGRLFIMTELGRLDVEPFEIAVIPRGVRFAVALPDGRARGYVCENFGALLRLPDLGPIGSNGLANPRDFLTPHASYEDREGAFELVAKLNGRLWRADIDHSPFDVVAWHGNYAPYKYDLRHFNTIGSISYDHPDPSIFLVLQSQSDTPGVDAIDFVIFPPRWLAAEDTFRPPWFHRNVASEFMGLVHGVYDAKAEGFVPGGASLHNCMSGHGPDADTFEKASSIDTSKPNKVGDTMAFMFETRTLIRPTRFALDTAQLQANYFECWQGLKKHFNPEQR</sequence>
<accession>Q3JPA3</accession>
<name>HGD_BURP1</name>
<gene>
    <name evidence="1" type="primary">hmgA</name>
    <name type="ordered locus">BURPS1710b_3228</name>
</gene>
<feature type="chain" id="PRO_0000225787" description="Homogentisate 1,2-dioxygenase">
    <location>
        <begin position="1"/>
        <end position="450"/>
    </location>
</feature>
<feature type="active site" description="Proton acceptor" evidence="1">
    <location>
        <position position="304"/>
    </location>
</feature>
<feature type="binding site" evidence="1">
    <location>
        <position position="347"/>
    </location>
    <ligand>
        <name>Fe cation</name>
        <dbReference type="ChEBI" id="CHEBI:24875"/>
    </ligand>
</feature>
<feature type="binding site" evidence="1">
    <location>
        <position position="353"/>
    </location>
    <ligand>
        <name>Fe cation</name>
        <dbReference type="ChEBI" id="CHEBI:24875"/>
    </ligand>
</feature>
<feature type="binding site" evidence="1">
    <location>
        <position position="362"/>
    </location>
    <ligand>
        <name>homogentisate</name>
        <dbReference type="ChEBI" id="CHEBI:16169"/>
    </ligand>
</feature>
<feature type="binding site" evidence="1">
    <location>
        <position position="383"/>
    </location>
    <ligand>
        <name>Fe cation</name>
        <dbReference type="ChEBI" id="CHEBI:24875"/>
    </ligand>
</feature>
<feature type="binding site" evidence="1">
    <location>
        <position position="383"/>
    </location>
    <ligand>
        <name>homogentisate</name>
        <dbReference type="ChEBI" id="CHEBI:16169"/>
    </ligand>
</feature>
<dbReference type="EC" id="1.13.11.5" evidence="1"/>
<dbReference type="EMBL" id="CP000124">
    <property type="protein sequence ID" value="ABA47587.1"/>
    <property type="molecule type" value="Genomic_DNA"/>
</dbReference>
<dbReference type="SMR" id="Q3JPA3"/>
<dbReference type="EnsemblBacteria" id="ABA47587">
    <property type="protein sequence ID" value="ABA47587"/>
    <property type="gene ID" value="BURPS1710b_3228"/>
</dbReference>
<dbReference type="KEGG" id="bpm:BURPS1710b_3228"/>
<dbReference type="HOGENOM" id="CLU_027174_0_0_4"/>
<dbReference type="UniPathway" id="UPA00139">
    <property type="reaction ID" value="UER00339"/>
</dbReference>
<dbReference type="Proteomes" id="UP000002700">
    <property type="component" value="Chromosome I"/>
</dbReference>
<dbReference type="GO" id="GO:0005737">
    <property type="term" value="C:cytoplasm"/>
    <property type="evidence" value="ECO:0007669"/>
    <property type="project" value="TreeGrafter"/>
</dbReference>
<dbReference type="GO" id="GO:0004411">
    <property type="term" value="F:homogentisate 1,2-dioxygenase activity"/>
    <property type="evidence" value="ECO:0007669"/>
    <property type="project" value="UniProtKB-UniRule"/>
</dbReference>
<dbReference type="GO" id="GO:0005506">
    <property type="term" value="F:iron ion binding"/>
    <property type="evidence" value="ECO:0007669"/>
    <property type="project" value="UniProtKB-UniRule"/>
</dbReference>
<dbReference type="GO" id="GO:0006559">
    <property type="term" value="P:L-phenylalanine catabolic process"/>
    <property type="evidence" value="ECO:0007669"/>
    <property type="project" value="UniProtKB-UniRule"/>
</dbReference>
<dbReference type="GO" id="GO:0006572">
    <property type="term" value="P:tyrosine catabolic process"/>
    <property type="evidence" value="ECO:0007669"/>
    <property type="project" value="UniProtKB-UniRule"/>
</dbReference>
<dbReference type="CDD" id="cd07000">
    <property type="entry name" value="cupin_HGO_N"/>
    <property type="match status" value="1"/>
</dbReference>
<dbReference type="FunFam" id="2.60.120.10:FF:000034">
    <property type="entry name" value="Homogentisate 1,2-dioxygenase"/>
    <property type="match status" value="1"/>
</dbReference>
<dbReference type="Gene3D" id="2.60.120.10">
    <property type="entry name" value="Jelly Rolls"/>
    <property type="match status" value="1"/>
</dbReference>
<dbReference type="HAMAP" id="MF_00334">
    <property type="entry name" value="Homogentis_dioxygen"/>
    <property type="match status" value="1"/>
</dbReference>
<dbReference type="InterPro" id="IPR046451">
    <property type="entry name" value="HgmA_C"/>
</dbReference>
<dbReference type="InterPro" id="IPR046452">
    <property type="entry name" value="HgmA_N"/>
</dbReference>
<dbReference type="InterPro" id="IPR005708">
    <property type="entry name" value="Homogentis_dOase"/>
</dbReference>
<dbReference type="InterPro" id="IPR022950">
    <property type="entry name" value="Homogentis_dOase_bac"/>
</dbReference>
<dbReference type="InterPro" id="IPR014710">
    <property type="entry name" value="RmlC-like_jellyroll"/>
</dbReference>
<dbReference type="InterPro" id="IPR011051">
    <property type="entry name" value="RmlC_Cupin_sf"/>
</dbReference>
<dbReference type="NCBIfam" id="TIGR01015">
    <property type="entry name" value="hmgA"/>
    <property type="match status" value="1"/>
</dbReference>
<dbReference type="PANTHER" id="PTHR11056">
    <property type="entry name" value="HOMOGENTISATE 1,2-DIOXYGENASE"/>
    <property type="match status" value="1"/>
</dbReference>
<dbReference type="PANTHER" id="PTHR11056:SF0">
    <property type="entry name" value="HOMOGENTISATE 1,2-DIOXYGENASE"/>
    <property type="match status" value="1"/>
</dbReference>
<dbReference type="Pfam" id="PF04209">
    <property type="entry name" value="HgmA_C"/>
    <property type="match status" value="1"/>
</dbReference>
<dbReference type="Pfam" id="PF20510">
    <property type="entry name" value="HgmA_N"/>
    <property type="match status" value="1"/>
</dbReference>
<dbReference type="SUPFAM" id="SSF51182">
    <property type="entry name" value="RmlC-like cupins"/>
    <property type="match status" value="1"/>
</dbReference>
<keyword id="KW-0223">Dioxygenase</keyword>
<keyword id="KW-0408">Iron</keyword>
<keyword id="KW-0479">Metal-binding</keyword>
<keyword id="KW-0560">Oxidoreductase</keyword>
<keyword id="KW-0585">Phenylalanine catabolism</keyword>
<keyword id="KW-0828">Tyrosine catabolism</keyword>
<evidence type="ECO:0000255" key="1">
    <source>
        <dbReference type="HAMAP-Rule" id="MF_00334"/>
    </source>
</evidence>
<proteinExistence type="inferred from homology"/>
<organism>
    <name type="scientific">Burkholderia pseudomallei (strain 1710b)</name>
    <dbReference type="NCBI Taxonomy" id="320372"/>
    <lineage>
        <taxon>Bacteria</taxon>
        <taxon>Pseudomonadati</taxon>
        <taxon>Pseudomonadota</taxon>
        <taxon>Betaproteobacteria</taxon>
        <taxon>Burkholderiales</taxon>
        <taxon>Burkholderiaceae</taxon>
        <taxon>Burkholderia</taxon>
        <taxon>pseudomallei group</taxon>
    </lineage>
</organism>
<reference key="1">
    <citation type="journal article" date="2010" name="Genome Biol. Evol.">
        <title>Continuing evolution of Burkholderia mallei through genome reduction and large-scale rearrangements.</title>
        <authorList>
            <person name="Losada L."/>
            <person name="Ronning C.M."/>
            <person name="DeShazer D."/>
            <person name="Woods D."/>
            <person name="Fedorova N."/>
            <person name="Kim H.S."/>
            <person name="Shabalina S.A."/>
            <person name="Pearson T.R."/>
            <person name="Brinkac L."/>
            <person name="Tan P."/>
            <person name="Nandi T."/>
            <person name="Crabtree J."/>
            <person name="Badger J."/>
            <person name="Beckstrom-Sternberg S."/>
            <person name="Saqib M."/>
            <person name="Schutzer S.E."/>
            <person name="Keim P."/>
            <person name="Nierman W.C."/>
        </authorList>
    </citation>
    <scope>NUCLEOTIDE SEQUENCE [LARGE SCALE GENOMIC DNA]</scope>
    <source>
        <strain>1710b</strain>
    </source>
</reference>
<protein>
    <recommendedName>
        <fullName evidence="1">Homogentisate 1,2-dioxygenase</fullName>
        <shortName evidence="1">HGDO</shortName>
        <ecNumber evidence="1">1.13.11.5</ecNumber>
    </recommendedName>
    <alternativeName>
        <fullName evidence="1">Homogentisate oxygenase</fullName>
    </alternativeName>
    <alternativeName>
        <fullName evidence="1">Homogentisic acid oxidase</fullName>
    </alternativeName>
    <alternativeName>
        <fullName evidence="1">Homogentisicase</fullName>
    </alternativeName>
</protein>
<comment type="function">
    <text evidence="1">Involved in the catabolism of homogentisate (2,5-dihydroxyphenylacetate or 2,5-OH-PhAc), a central intermediate in the degradation of phenylalanine and tyrosine. Catalyzes the oxidative ring cleavage of the aromatic ring of homogentisate to yield maleylacetoacetate.</text>
</comment>
<comment type="catalytic activity">
    <reaction evidence="1">
        <text>homogentisate + O2 = 4-maleylacetoacetate + H(+)</text>
        <dbReference type="Rhea" id="RHEA:15449"/>
        <dbReference type="ChEBI" id="CHEBI:15378"/>
        <dbReference type="ChEBI" id="CHEBI:15379"/>
        <dbReference type="ChEBI" id="CHEBI:16169"/>
        <dbReference type="ChEBI" id="CHEBI:17105"/>
        <dbReference type="EC" id="1.13.11.5"/>
    </reaction>
</comment>
<comment type="cofactor">
    <cofactor evidence="1">
        <name>Fe cation</name>
        <dbReference type="ChEBI" id="CHEBI:24875"/>
    </cofactor>
</comment>
<comment type="pathway">
    <text evidence="1">Amino-acid degradation; L-phenylalanine degradation; acetoacetate and fumarate from L-phenylalanine: step 4/6.</text>
</comment>
<comment type="subunit">
    <text evidence="1">Hexamer; dimer of trimers.</text>
</comment>
<comment type="similarity">
    <text evidence="1">Belongs to the homogentisate dioxygenase family.</text>
</comment>